<gene>
    <name evidence="1" type="primary">cysS</name>
    <name type="ordered locus">CLM_3972</name>
</gene>
<evidence type="ECO:0000255" key="1">
    <source>
        <dbReference type="HAMAP-Rule" id="MF_00041"/>
    </source>
</evidence>
<keyword id="KW-0030">Aminoacyl-tRNA synthetase</keyword>
<keyword id="KW-0067">ATP-binding</keyword>
<keyword id="KW-0963">Cytoplasm</keyword>
<keyword id="KW-0436">Ligase</keyword>
<keyword id="KW-0479">Metal-binding</keyword>
<keyword id="KW-0547">Nucleotide-binding</keyword>
<keyword id="KW-0648">Protein biosynthesis</keyword>
<keyword id="KW-0862">Zinc</keyword>
<dbReference type="EC" id="6.1.1.16" evidence="1"/>
<dbReference type="EMBL" id="CP001581">
    <property type="protein sequence ID" value="ACO85617.1"/>
    <property type="molecule type" value="Genomic_DNA"/>
</dbReference>
<dbReference type="RefSeq" id="WP_012704855.1">
    <property type="nucleotide sequence ID" value="NC_012563.1"/>
</dbReference>
<dbReference type="SMR" id="C1FMX3"/>
<dbReference type="KEGG" id="cby:CLM_3972"/>
<dbReference type="eggNOG" id="COG0215">
    <property type="taxonomic scope" value="Bacteria"/>
</dbReference>
<dbReference type="HOGENOM" id="CLU_013528_0_1_9"/>
<dbReference type="Proteomes" id="UP000001374">
    <property type="component" value="Chromosome"/>
</dbReference>
<dbReference type="GO" id="GO:0005829">
    <property type="term" value="C:cytosol"/>
    <property type="evidence" value="ECO:0007669"/>
    <property type="project" value="TreeGrafter"/>
</dbReference>
<dbReference type="GO" id="GO:0005524">
    <property type="term" value="F:ATP binding"/>
    <property type="evidence" value="ECO:0007669"/>
    <property type="project" value="UniProtKB-UniRule"/>
</dbReference>
<dbReference type="GO" id="GO:0004817">
    <property type="term" value="F:cysteine-tRNA ligase activity"/>
    <property type="evidence" value="ECO:0007669"/>
    <property type="project" value="UniProtKB-UniRule"/>
</dbReference>
<dbReference type="GO" id="GO:0008270">
    <property type="term" value="F:zinc ion binding"/>
    <property type="evidence" value="ECO:0007669"/>
    <property type="project" value="UniProtKB-UniRule"/>
</dbReference>
<dbReference type="GO" id="GO:0006423">
    <property type="term" value="P:cysteinyl-tRNA aminoacylation"/>
    <property type="evidence" value="ECO:0007669"/>
    <property type="project" value="UniProtKB-UniRule"/>
</dbReference>
<dbReference type="CDD" id="cd00672">
    <property type="entry name" value="CysRS_core"/>
    <property type="match status" value="1"/>
</dbReference>
<dbReference type="FunFam" id="3.40.50.620:FF:000009">
    <property type="entry name" value="Cysteine--tRNA ligase"/>
    <property type="match status" value="1"/>
</dbReference>
<dbReference type="Gene3D" id="1.20.120.1910">
    <property type="entry name" value="Cysteine-tRNA ligase, C-terminal anti-codon recognition domain"/>
    <property type="match status" value="1"/>
</dbReference>
<dbReference type="Gene3D" id="3.40.50.620">
    <property type="entry name" value="HUPs"/>
    <property type="match status" value="1"/>
</dbReference>
<dbReference type="HAMAP" id="MF_00041">
    <property type="entry name" value="Cys_tRNA_synth"/>
    <property type="match status" value="1"/>
</dbReference>
<dbReference type="InterPro" id="IPR015803">
    <property type="entry name" value="Cys-tRNA-ligase"/>
</dbReference>
<dbReference type="InterPro" id="IPR015273">
    <property type="entry name" value="Cys-tRNA-synt_Ia_DALR"/>
</dbReference>
<dbReference type="InterPro" id="IPR024909">
    <property type="entry name" value="Cys-tRNA/MSH_ligase"/>
</dbReference>
<dbReference type="InterPro" id="IPR056411">
    <property type="entry name" value="CysS_C"/>
</dbReference>
<dbReference type="InterPro" id="IPR014729">
    <property type="entry name" value="Rossmann-like_a/b/a_fold"/>
</dbReference>
<dbReference type="InterPro" id="IPR032678">
    <property type="entry name" value="tRNA-synt_1_cat_dom"/>
</dbReference>
<dbReference type="InterPro" id="IPR009080">
    <property type="entry name" value="tRNAsynth_Ia_anticodon-bd"/>
</dbReference>
<dbReference type="NCBIfam" id="TIGR00435">
    <property type="entry name" value="cysS"/>
    <property type="match status" value="1"/>
</dbReference>
<dbReference type="PANTHER" id="PTHR10890:SF3">
    <property type="entry name" value="CYSTEINE--TRNA LIGASE, CYTOPLASMIC"/>
    <property type="match status" value="1"/>
</dbReference>
<dbReference type="PANTHER" id="PTHR10890">
    <property type="entry name" value="CYSTEINYL-TRNA SYNTHETASE"/>
    <property type="match status" value="1"/>
</dbReference>
<dbReference type="Pfam" id="PF23493">
    <property type="entry name" value="CysS_C"/>
    <property type="match status" value="1"/>
</dbReference>
<dbReference type="Pfam" id="PF09190">
    <property type="entry name" value="DALR_2"/>
    <property type="match status" value="1"/>
</dbReference>
<dbReference type="Pfam" id="PF01406">
    <property type="entry name" value="tRNA-synt_1e"/>
    <property type="match status" value="1"/>
</dbReference>
<dbReference type="PRINTS" id="PR00983">
    <property type="entry name" value="TRNASYNTHCYS"/>
</dbReference>
<dbReference type="SMART" id="SM00840">
    <property type="entry name" value="DALR_2"/>
    <property type="match status" value="1"/>
</dbReference>
<dbReference type="SUPFAM" id="SSF47323">
    <property type="entry name" value="Anticodon-binding domain of a subclass of class I aminoacyl-tRNA synthetases"/>
    <property type="match status" value="1"/>
</dbReference>
<dbReference type="SUPFAM" id="SSF52374">
    <property type="entry name" value="Nucleotidylyl transferase"/>
    <property type="match status" value="1"/>
</dbReference>
<protein>
    <recommendedName>
        <fullName evidence="1">Cysteine--tRNA ligase</fullName>
        <ecNumber evidence="1">6.1.1.16</ecNumber>
    </recommendedName>
    <alternativeName>
        <fullName evidence="1">Cysteinyl-tRNA synthetase</fullName>
        <shortName evidence="1">CysRS</shortName>
    </alternativeName>
</protein>
<name>SYC_CLOBJ</name>
<organism>
    <name type="scientific">Clostridium botulinum (strain Kyoto / Type A2)</name>
    <dbReference type="NCBI Taxonomy" id="536232"/>
    <lineage>
        <taxon>Bacteria</taxon>
        <taxon>Bacillati</taxon>
        <taxon>Bacillota</taxon>
        <taxon>Clostridia</taxon>
        <taxon>Eubacteriales</taxon>
        <taxon>Clostridiaceae</taxon>
        <taxon>Clostridium</taxon>
    </lineage>
</organism>
<reference key="1">
    <citation type="submission" date="2008-10" db="EMBL/GenBank/DDBJ databases">
        <title>Genome sequence of Clostridium botulinum A2 Kyoto.</title>
        <authorList>
            <person name="Shrivastava S."/>
            <person name="Brinkac L.M."/>
            <person name="Brown J.L."/>
            <person name="Bruce D."/>
            <person name="Detter C.C."/>
            <person name="Johnson E.A."/>
            <person name="Munk C.A."/>
            <person name="Smith L.A."/>
            <person name="Smith T.J."/>
            <person name="Sutton G."/>
            <person name="Brettin T.S."/>
        </authorList>
    </citation>
    <scope>NUCLEOTIDE SEQUENCE [LARGE SCALE GENOMIC DNA]</scope>
    <source>
        <strain>Kyoto / Type A2</strain>
    </source>
</reference>
<feature type="chain" id="PRO_1000199051" description="Cysteine--tRNA ligase">
    <location>
        <begin position="1"/>
        <end position="465"/>
    </location>
</feature>
<feature type="short sequence motif" description="'HIGH' region">
    <location>
        <begin position="29"/>
        <end position="39"/>
    </location>
</feature>
<feature type="short sequence motif" description="'KMSKS' region">
    <location>
        <begin position="264"/>
        <end position="268"/>
    </location>
</feature>
<feature type="binding site" evidence="1">
    <location>
        <position position="27"/>
    </location>
    <ligand>
        <name>Zn(2+)</name>
        <dbReference type="ChEBI" id="CHEBI:29105"/>
    </ligand>
</feature>
<feature type="binding site" evidence="1">
    <location>
        <position position="207"/>
    </location>
    <ligand>
        <name>Zn(2+)</name>
        <dbReference type="ChEBI" id="CHEBI:29105"/>
    </ligand>
</feature>
<feature type="binding site" evidence="1">
    <location>
        <position position="232"/>
    </location>
    <ligand>
        <name>Zn(2+)</name>
        <dbReference type="ChEBI" id="CHEBI:29105"/>
    </ligand>
</feature>
<feature type="binding site" evidence="1">
    <location>
        <position position="236"/>
    </location>
    <ligand>
        <name>Zn(2+)</name>
        <dbReference type="ChEBI" id="CHEBI:29105"/>
    </ligand>
</feature>
<feature type="binding site" evidence="1">
    <location>
        <position position="267"/>
    </location>
    <ligand>
        <name>ATP</name>
        <dbReference type="ChEBI" id="CHEBI:30616"/>
    </ligand>
</feature>
<sequence length="465" mass="54303">MKVYNTLTNKKEEFLTLVPGEVKMYVCGPTVYNFFHIGNARTFVVFDTIRRYLEYRGYKVKFIQNFTDIDDKMIKRANEEGSTVKELGDRFIKEYYKDADDLNIERATKNPRATEFMEEIIKFVSDLIEKGYAYEIDGDVYFSTKKFNSYGKLSGQNLEELQLGARINVDERKKDPMDFAIWKSQKPGEPAWESPWGMGRPGWHIECSCMAYNLLGETIDIHAGGSDLSFPHHENEIAQSEARTGKQFAKYWLHSAFVNVNNQKMSKSLNNFFTAREILEKYDADVLRMFMLSGHYRTQINFSMELLDSTKSALDRLYNSINNLENLLDEVKNEELRDEELEYKNELQKYKEKYIEKMDDDFNTADAISVIFDLIRDVNTNVTIESSKELVKYTLDLIRELGSPLGILQESTKASLEEEIEKLIEERQKARKEKNWALADKIRDNLKERGIVLEDTPQGVRWKQI</sequence>
<accession>C1FMX3</accession>
<proteinExistence type="inferred from homology"/>
<comment type="catalytic activity">
    <reaction evidence="1">
        <text>tRNA(Cys) + L-cysteine + ATP = L-cysteinyl-tRNA(Cys) + AMP + diphosphate</text>
        <dbReference type="Rhea" id="RHEA:17773"/>
        <dbReference type="Rhea" id="RHEA-COMP:9661"/>
        <dbReference type="Rhea" id="RHEA-COMP:9679"/>
        <dbReference type="ChEBI" id="CHEBI:30616"/>
        <dbReference type="ChEBI" id="CHEBI:33019"/>
        <dbReference type="ChEBI" id="CHEBI:35235"/>
        <dbReference type="ChEBI" id="CHEBI:78442"/>
        <dbReference type="ChEBI" id="CHEBI:78517"/>
        <dbReference type="ChEBI" id="CHEBI:456215"/>
        <dbReference type="EC" id="6.1.1.16"/>
    </reaction>
</comment>
<comment type="cofactor">
    <cofactor evidence="1">
        <name>Zn(2+)</name>
        <dbReference type="ChEBI" id="CHEBI:29105"/>
    </cofactor>
    <text evidence="1">Binds 1 zinc ion per subunit.</text>
</comment>
<comment type="subunit">
    <text evidence="1">Monomer.</text>
</comment>
<comment type="subcellular location">
    <subcellularLocation>
        <location evidence="1">Cytoplasm</location>
    </subcellularLocation>
</comment>
<comment type="similarity">
    <text evidence="1">Belongs to the class-I aminoacyl-tRNA synthetase family.</text>
</comment>